<sequence>MQVNENPNKVPVELNRTSLYLGVLSVLVLGILFSSYFFN</sequence>
<feature type="chain" id="PRO_0000306207" description="Photosystem II reaction center protein L">
    <location>
        <begin position="1"/>
        <end position="39"/>
    </location>
</feature>
<feature type="transmembrane region" description="Helical" evidence="1">
    <location>
        <begin position="18"/>
        <end position="38"/>
    </location>
</feature>
<proteinExistence type="inferred from homology"/>
<organism>
    <name type="scientific">Prochlorococcus marinus (strain MIT 9515)</name>
    <dbReference type="NCBI Taxonomy" id="167542"/>
    <lineage>
        <taxon>Bacteria</taxon>
        <taxon>Bacillati</taxon>
        <taxon>Cyanobacteriota</taxon>
        <taxon>Cyanophyceae</taxon>
        <taxon>Synechococcales</taxon>
        <taxon>Prochlorococcaceae</taxon>
        <taxon>Prochlorococcus</taxon>
    </lineage>
</organism>
<accession>A2BUT0</accession>
<name>PSBL_PROM5</name>
<protein>
    <recommendedName>
        <fullName evidence="1">Photosystem II reaction center protein L</fullName>
        <shortName evidence="1">PSII-L</shortName>
    </recommendedName>
</protein>
<gene>
    <name evidence="1" type="primary">psbL</name>
    <name type="ordered locus">P9515_03321</name>
</gene>
<comment type="function">
    <text evidence="1">One of the components of the core complex of photosystem II (PSII). PSII is a light-driven water:plastoquinone oxidoreductase that uses light energy to abstract electrons from H(2)O, generating O(2) and a proton gradient subsequently used for ATP formation. It consists of a core antenna complex that captures photons, and an electron transfer chain that converts photonic excitation into a charge separation. This subunit is found at the monomer-monomer interface and is required for correct PSII assembly and/or dimerization.</text>
</comment>
<comment type="subunit">
    <text evidence="2">PSII is composed of 1 copy each of membrane proteins PsbA, PsbB, PsbC, PsbD, PsbE, PsbF, PsbH, PsbI, PsbJ, PsbK, PsbL, PsbM, PsbT, PsbX, PsbY, Psb30/Ycf12, peripheral proteins PsbO, CyanoQ (PsbQ), PsbU, PsbV and a large number of cofactors. It forms dimeric complexes.</text>
</comment>
<comment type="subcellular location">
    <subcellularLocation>
        <location evidence="1">Cellular thylakoid membrane</location>
        <topology evidence="1">Single-pass membrane protein</topology>
    </subcellularLocation>
</comment>
<comment type="similarity">
    <text evidence="1">Belongs to the PsbL family.</text>
</comment>
<reference key="1">
    <citation type="journal article" date="2007" name="PLoS Genet.">
        <title>Patterns and implications of gene gain and loss in the evolution of Prochlorococcus.</title>
        <authorList>
            <person name="Kettler G.C."/>
            <person name="Martiny A.C."/>
            <person name="Huang K."/>
            <person name="Zucker J."/>
            <person name="Coleman M.L."/>
            <person name="Rodrigue S."/>
            <person name="Chen F."/>
            <person name="Lapidus A."/>
            <person name="Ferriera S."/>
            <person name="Johnson J."/>
            <person name="Steglich C."/>
            <person name="Church G.M."/>
            <person name="Richardson P."/>
            <person name="Chisholm S.W."/>
        </authorList>
    </citation>
    <scope>NUCLEOTIDE SEQUENCE [LARGE SCALE GENOMIC DNA]</scope>
    <source>
        <strain>MIT 9515</strain>
    </source>
</reference>
<evidence type="ECO:0000255" key="1">
    <source>
        <dbReference type="HAMAP-Rule" id="MF_01317"/>
    </source>
</evidence>
<evidence type="ECO:0000305" key="2"/>
<keyword id="KW-0472">Membrane</keyword>
<keyword id="KW-0602">Photosynthesis</keyword>
<keyword id="KW-0604">Photosystem II</keyword>
<keyword id="KW-0674">Reaction center</keyword>
<keyword id="KW-0793">Thylakoid</keyword>
<keyword id="KW-0812">Transmembrane</keyword>
<keyword id="KW-1133">Transmembrane helix</keyword>
<dbReference type="EMBL" id="CP000552">
    <property type="protein sequence ID" value="ABM71541.1"/>
    <property type="molecule type" value="Genomic_DNA"/>
</dbReference>
<dbReference type="RefSeq" id="WP_011819650.1">
    <property type="nucleotide sequence ID" value="NC_008817.1"/>
</dbReference>
<dbReference type="SMR" id="A2BUT0"/>
<dbReference type="STRING" id="167542.P9515_03321"/>
<dbReference type="GeneID" id="60200380"/>
<dbReference type="KEGG" id="pmc:P9515_03321"/>
<dbReference type="HOGENOM" id="CLU_214425_0_0_3"/>
<dbReference type="Proteomes" id="UP000001589">
    <property type="component" value="Chromosome"/>
</dbReference>
<dbReference type="GO" id="GO:0009539">
    <property type="term" value="C:photosystem II reaction center"/>
    <property type="evidence" value="ECO:0007669"/>
    <property type="project" value="InterPro"/>
</dbReference>
<dbReference type="GO" id="GO:0031676">
    <property type="term" value="C:plasma membrane-derived thylakoid membrane"/>
    <property type="evidence" value="ECO:0007669"/>
    <property type="project" value="UniProtKB-SubCell"/>
</dbReference>
<dbReference type="GO" id="GO:0015979">
    <property type="term" value="P:photosynthesis"/>
    <property type="evidence" value="ECO:0007669"/>
    <property type="project" value="UniProtKB-UniRule"/>
</dbReference>
<dbReference type="HAMAP" id="MF_01317">
    <property type="entry name" value="PSII_PsbL"/>
    <property type="match status" value="1"/>
</dbReference>
<dbReference type="InterPro" id="IPR003372">
    <property type="entry name" value="PSII_PsbL"/>
</dbReference>
<dbReference type="InterPro" id="IPR037266">
    <property type="entry name" value="PSII_PsbL_sf"/>
</dbReference>
<dbReference type="NCBIfam" id="NF001972">
    <property type="entry name" value="PRK00753.1"/>
    <property type="match status" value="1"/>
</dbReference>
<dbReference type="Pfam" id="PF02419">
    <property type="entry name" value="PsbL"/>
    <property type="match status" value="1"/>
</dbReference>
<dbReference type="SUPFAM" id="SSF161017">
    <property type="entry name" value="Photosystem II reaction center protein L, PsbL"/>
    <property type="match status" value="1"/>
</dbReference>